<proteinExistence type="inferred from homology"/>
<comment type="function">
    <text evidence="1">Catalyzes a reversible aldol reaction between acetaldehyde and D-glyceraldehyde 3-phosphate to generate 2-deoxy-D-ribose 5-phosphate.</text>
</comment>
<comment type="catalytic activity">
    <reaction evidence="1">
        <text>2-deoxy-D-ribose 5-phosphate = D-glyceraldehyde 3-phosphate + acetaldehyde</text>
        <dbReference type="Rhea" id="RHEA:12821"/>
        <dbReference type="ChEBI" id="CHEBI:15343"/>
        <dbReference type="ChEBI" id="CHEBI:59776"/>
        <dbReference type="ChEBI" id="CHEBI:62877"/>
        <dbReference type="EC" id="4.1.2.4"/>
    </reaction>
</comment>
<comment type="pathway">
    <text evidence="1">Carbohydrate degradation; 2-deoxy-D-ribose 1-phosphate degradation; D-glyceraldehyde 3-phosphate and acetaldehyde from 2-deoxy-alpha-D-ribose 1-phosphate: step 2/2.</text>
</comment>
<comment type="subcellular location">
    <subcellularLocation>
        <location evidence="1">Cytoplasm</location>
    </subcellularLocation>
</comment>
<comment type="similarity">
    <text evidence="1">Belongs to the DeoC/FbaB aldolase family. DeoC type 2 subfamily.</text>
</comment>
<sequence length="258" mass="27605">MSLKDSAKIALSLMDLTTLNDNDTDEKVITLCQQGKTEFGTPAAVCVYPRFVPIARKALKAQGTEQVKIATVTNFPHGNDDIDIAVAETKAAVAYGADEVDVVFPYKALMAGNEQIGFELVQQCKAVCQASNVLLKVIIETGELKTAELIRKASEISIKAGADFIKTSTGKVPVNATLESARIMLETIRDLNVADRVGFKAAGGVKTAEEAAQYLALAQEILGHDWVNSDHFRFGASSLLTNLLAALNGQANQKVSGY</sequence>
<organism>
    <name type="scientific">Actinobacillus pleuropneumoniae serotype 7 (strain AP76)</name>
    <dbReference type="NCBI Taxonomy" id="537457"/>
    <lineage>
        <taxon>Bacteria</taxon>
        <taxon>Pseudomonadati</taxon>
        <taxon>Pseudomonadota</taxon>
        <taxon>Gammaproteobacteria</taxon>
        <taxon>Pasteurellales</taxon>
        <taxon>Pasteurellaceae</taxon>
        <taxon>Actinobacillus</taxon>
    </lineage>
</organism>
<dbReference type="EC" id="4.1.2.4" evidence="1"/>
<dbReference type="EMBL" id="CP001091">
    <property type="protein sequence ID" value="ACE61724.1"/>
    <property type="molecule type" value="Genomic_DNA"/>
</dbReference>
<dbReference type="RefSeq" id="WP_005601457.1">
    <property type="nucleotide sequence ID" value="NC_010939.1"/>
</dbReference>
<dbReference type="SMR" id="B3H1P7"/>
<dbReference type="KEGG" id="apa:APP7_1072"/>
<dbReference type="HOGENOM" id="CLU_053595_3_1_6"/>
<dbReference type="UniPathway" id="UPA00002">
    <property type="reaction ID" value="UER00468"/>
</dbReference>
<dbReference type="Proteomes" id="UP000001226">
    <property type="component" value="Chromosome"/>
</dbReference>
<dbReference type="GO" id="GO:0005737">
    <property type="term" value="C:cytoplasm"/>
    <property type="evidence" value="ECO:0007669"/>
    <property type="project" value="UniProtKB-SubCell"/>
</dbReference>
<dbReference type="GO" id="GO:0004139">
    <property type="term" value="F:deoxyribose-phosphate aldolase activity"/>
    <property type="evidence" value="ECO:0007669"/>
    <property type="project" value="UniProtKB-UniRule"/>
</dbReference>
<dbReference type="GO" id="GO:0006018">
    <property type="term" value="P:2-deoxyribose 1-phosphate catabolic process"/>
    <property type="evidence" value="ECO:0007669"/>
    <property type="project" value="UniProtKB-UniRule"/>
</dbReference>
<dbReference type="GO" id="GO:0016052">
    <property type="term" value="P:carbohydrate catabolic process"/>
    <property type="evidence" value="ECO:0007669"/>
    <property type="project" value="TreeGrafter"/>
</dbReference>
<dbReference type="GO" id="GO:0009264">
    <property type="term" value="P:deoxyribonucleotide catabolic process"/>
    <property type="evidence" value="ECO:0007669"/>
    <property type="project" value="InterPro"/>
</dbReference>
<dbReference type="CDD" id="cd00959">
    <property type="entry name" value="DeoC"/>
    <property type="match status" value="1"/>
</dbReference>
<dbReference type="Gene3D" id="3.20.20.70">
    <property type="entry name" value="Aldolase class I"/>
    <property type="match status" value="1"/>
</dbReference>
<dbReference type="HAMAP" id="MF_00592">
    <property type="entry name" value="DeoC_type2"/>
    <property type="match status" value="1"/>
</dbReference>
<dbReference type="InterPro" id="IPR013785">
    <property type="entry name" value="Aldolase_TIM"/>
</dbReference>
<dbReference type="InterPro" id="IPR011343">
    <property type="entry name" value="DeoC"/>
</dbReference>
<dbReference type="InterPro" id="IPR002915">
    <property type="entry name" value="DeoC/FbaB/LacD_aldolase"/>
</dbReference>
<dbReference type="InterPro" id="IPR023649">
    <property type="entry name" value="DeoC_typeII"/>
</dbReference>
<dbReference type="NCBIfam" id="TIGR00126">
    <property type="entry name" value="deoC"/>
    <property type="match status" value="1"/>
</dbReference>
<dbReference type="PANTHER" id="PTHR10889">
    <property type="entry name" value="DEOXYRIBOSE-PHOSPHATE ALDOLASE"/>
    <property type="match status" value="1"/>
</dbReference>
<dbReference type="PANTHER" id="PTHR10889:SF3">
    <property type="entry name" value="DEOXYRIBOSE-PHOSPHATE ALDOLASE"/>
    <property type="match status" value="1"/>
</dbReference>
<dbReference type="Pfam" id="PF01791">
    <property type="entry name" value="DeoC"/>
    <property type="match status" value="1"/>
</dbReference>
<dbReference type="PIRSF" id="PIRSF001357">
    <property type="entry name" value="DeoC"/>
    <property type="match status" value="1"/>
</dbReference>
<dbReference type="SMART" id="SM01133">
    <property type="entry name" value="DeoC"/>
    <property type="match status" value="1"/>
</dbReference>
<dbReference type="SUPFAM" id="SSF51569">
    <property type="entry name" value="Aldolase"/>
    <property type="match status" value="1"/>
</dbReference>
<gene>
    <name evidence="1" type="primary">deoC</name>
    <name type="ordered locus">APP7_1072</name>
</gene>
<reference key="1">
    <citation type="submission" date="2008-06" db="EMBL/GenBank/DDBJ databases">
        <title>Genome and proteome analysis of A. pleuropneumoniae serotype 7.</title>
        <authorList>
            <person name="Linke B."/>
            <person name="Buettner F."/>
            <person name="Martinez-Arias R."/>
            <person name="Goesmann A."/>
            <person name="Baltes N."/>
            <person name="Tegetmeyer H."/>
            <person name="Singh M."/>
            <person name="Gerlach G.F."/>
        </authorList>
    </citation>
    <scope>NUCLEOTIDE SEQUENCE [LARGE SCALE GENOMIC DNA]</scope>
    <source>
        <strain>AP76</strain>
    </source>
</reference>
<keyword id="KW-0963">Cytoplasm</keyword>
<keyword id="KW-0456">Lyase</keyword>
<keyword id="KW-0704">Schiff base</keyword>
<evidence type="ECO:0000255" key="1">
    <source>
        <dbReference type="HAMAP-Rule" id="MF_00592"/>
    </source>
</evidence>
<name>DEOC_ACTP7</name>
<accession>B3H1P7</accession>
<feature type="chain" id="PRO_1000129796" description="Deoxyribose-phosphate aldolase">
    <location>
        <begin position="1"/>
        <end position="258"/>
    </location>
</feature>
<feature type="active site" description="Proton donor/acceptor" evidence="1">
    <location>
        <position position="101"/>
    </location>
</feature>
<feature type="active site" description="Schiff-base intermediate with acetaldehyde" evidence="1">
    <location>
        <position position="166"/>
    </location>
</feature>
<feature type="active site" description="Proton donor/acceptor" evidence="1">
    <location>
        <position position="200"/>
    </location>
</feature>
<protein>
    <recommendedName>
        <fullName evidence="1">Deoxyribose-phosphate aldolase</fullName>
        <shortName evidence="1">DERA</shortName>
        <ecNumber evidence="1">4.1.2.4</ecNumber>
    </recommendedName>
    <alternativeName>
        <fullName evidence="1">2-deoxy-D-ribose 5-phosphate aldolase</fullName>
    </alternativeName>
    <alternativeName>
        <fullName evidence="1">Phosphodeoxyriboaldolase</fullName>
        <shortName evidence="1">Deoxyriboaldolase</shortName>
    </alternativeName>
</protein>